<protein>
    <recommendedName>
        <fullName evidence="26">Histone-lysine N-methyltransferase EZH2</fullName>
        <ecNumber evidence="2">2.1.1.356</ecNumber>
    </recommendedName>
    <alternativeName>
        <fullName>ENX-1</fullName>
    </alternativeName>
    <alternativeName>
        <fullName>Enhancer of zeste homolog 2</fullName>
    </alternativeName>
</protein>
<reference key="1">
    <citation type="journal article" date="1996" name="Mech. Dev.">
        <title>Isolation and developmental expression analysis of Enx-1, a novel mouse Polycomb group gene.</title>
        <authorList>
            <person name="Hobert O."/>
            <person name="Sures I."/>
            <person name="Ciossek T."/>
            <person name="Fuchs M."/>
            <person name="Ullrich A."/>
        </authorList>
    </citation>
    <scope>NUCLEOTIDE SEQUENCE [MRNA]</scope>
    <source>
        <tissue>Placenta</tissue>
    </source>
</reference>
<reference key="2">
    <citation type="submission" date="2005-09" db="EMBL/GenBank/DDBJ databases">
        <authorList>
            <person name="Mural R.J."/>
            <person name="Adams M.D."/>
            <person name="Myers E.W."/>
            <person name="Smith H.O."/>
            <person name="Venter J.C."/>
        </authorList>
    </citation>
    <scope>NUCLEOTIDE SEQUENCE [LARGE SCALE GENOMIC DNA]</scope>
</reference>
<reference key="3">
    <citation type="journal article" date="2004" name="Genome Res.">
        <title>The status, quality, and expansion of the NIH full-length cDNA project: the Mammalian Gene Collection (MGC).</title>
        <authorList>
            <consortium name="The MGC Project Team"/>
        </authorList>
    </citation>
    <scope>NUCLEOTIDE SEQUENCE [LARGE SCALE MRNA]</scope>
    <source>
        <strain>Czech II</strain>
        <tissue>Mammary tumor</tissue>
    </source>
</reference>
<reference key="4">
    <citation type="journal article" date="1999" name="Mamm. Genome">
        <title>The murine polycomb-group genes ezh1 and ezh2 map close to hox gene clusters on mouse chromosomes 11 and 6.</title>
        <authorList>
            <person name="Laible G."/>
            <person name="Haynes A.R."/>
            <person name="Lebersorger A."/>
            <person name="O'Carroll D."/>
            <person name="Mattei M.-G."/>
            <person name="Denny P."/>
            <person name="Brown S.D.M."/>
            <person name="Jenuwein T."/>
        </authorList>
    </citation>
    <scope>NUCLEOTIDE SEQUENCE [GENOMIC DNA] OF 134-497</scope>
    <source>
        <strain>129/Sv</strain>
    </source>
</reference>
<reference key="5">
    <citation type="journal article" date="1998" name="Mol. Cell. Biol.">
        <title>Point mutations in the WD40 domain of Eed block its interaction with Ezh2.</title>
        <authorList>
            <person name="Denisenko O.N."/>
            <person name="Shnyreva M."/>
            <person name="Suzuki H."/>
            <person name="Bomsztyk K."/>
        </authorList>
    </citation>
    <scope>INTERACTION WITH EED</scope>
</reference>
<reference key="6">
    <citation type="journal article" date="2001" name="Mol. Cell. Biol.">
        <title>The polycomb-group gene Ezh2 is required for early mouse development.</title>
        <authorList>
            <person name="O'Carroll D."/>
            <person name="Erhardt S."/>
            <person name="Pagani M."/>
            <person name="Barton S.C."/>
            <person name="Surani M.A."/>
            <person name="Jenuwein T."/>
        </authorList>
    </citation>
    <scope>DISRUPTION PHENOTYPE</scope>
</reference>
<reference key="7">
    <citation type="journal article" date="2002" name="Curr. Biol.">
        <title>Mitotically stable association of polycomb group proteins Eed and Enx1 with the inactive X chromosome in trophoblast stem cells.</title>
        <authorList>
            <person name="Mak W."/>
            <person name="Baxter J."/>
            <person name="Silva J."/>
            <person name="Newall A.E."/>
            <person name="Otte A.P."/>
            <person name="Brockdorff N."/>
        </authorList>
    </citation>
    <scope>SUBCELLULAR LOCATION</scope>
</reference>
<reference key="8">
    <citation type="journal article" date="2003" name="Dev. Cell">
        <title>Establishment of histone H3 methylation on the inactive X chromosome requires transient recruitment of Eed-Enx1 polycomb group complexes.</title>
        <authorList>
            <person name="Silva J."/>
            <person name="Mak W."/>
            <person name="Zvetkova I."/>
            <person name="Appanah R."/>
            <person name="Nesterova T.B."/>
            <person name="Webster Z."/>
            <person name="Peters A.H.F.M."/>
            <person name="Jenuwein T."/>
            <person name="Otte A.P."/>
            <person name="Brockdorff N."/>
        </authorList>
    </citation>
    <scope>FUNCTION</scope>
    <scope>SUBCELLULAR LOCATION</scope>
    <scope>DEVELOPMENTAL STAGE</scope>
</reference>
<reference key="9">
    <citation type="journal article" date="2003" name="Science">
        <title>Role of histone H3 lysine 27 methylation in X inactivation.</title>
        <authorList>
            <person name="Plath K."/>
            <person name="Fang J."/>
            <person name="Mlynarczyk-Evans S.K."/>
            <person name="Cao R."/>
            <person name="Worringer K.A."/>
            <person name="Wang H."/>
            <person name="de la Cruz C.C."/>
            <person name="Otte A.P."/>
            <person name="Panning B."/>
            <person name="Zhang Y."/>
        </authorList>
    </citation>
    <scope>SUBCELLULAR LOCATION</scope>
</reference>
<reference key="10">
    <citation type="journal article" date="2004" name="Genes Dev.">
        <title>The Polycomb Ezh2 methyltransferase regulates muscle gene expression and skeletal muscle differentiation.</title>
        <authorList>
            <person name="Caretti G."/>
            <person name="Di Padova M."/>
            <person name="Micales B."/>
            <person name="Lyons G.E."/>
            <person name="Sartorelli V."/>
        </authorList>
    </citation>
    <scope>FUNCTION</scope>
</reference>
<reference key="11">
    <citation type="journal article" date="2005" name="Genes Dev.">
        <authorList>
            <person name="Caretti G."/>
            <person name="Di Padova M."/>
            <person name="Micales B."/>
            <person name="Lyons G.E."/>
            <person name="Sartorelli V."/>
        </authorList>
    </citation>
    <scope>ERRATUM OF PUBMED:15520282</scope>
</reference>
<reference key="12">
    <citation type="journal article" date="2004" name="Nat. Genet.">
        <title>Imprinting along the Kcnq1 domain on mouse chromosome 7 involves repressive histone methylation and recruitment of Polycomb group complexes.</title>
        <authorList>
            <person name="Umlauf D."/>
            <person name="Goto Y."/>
            <person name="Cao R."/>
            <person name="Cerqueira F."/>
            <person name="Wagschal A."/>
            <person name="Zhang Y."/>
            <person name="Feil R."/>
        </authorList>
    </citation>
    <scope>FUNCTION</scope>
</reference>
<reference key="13">
    <citation type="journal article" date="2004" name="Science">
        <title>Reactivation of the paternal X chromosome in early mouse embryos.</title>
        <authorList>
            <person name="Mak W."/>
            <person name="Nesterova T.B."/>
            <person name="de Napoles M."/>
            <person name="Appanah R."/>
            <person name="Yamanaka S."/>
            <person name="Otte A.P."/>
            <person name="Brockdorff N."/>
        </authorList>
    </citation>
    <scope>SUBCELLULAR LOCATION</scope>
</reference>
<reference key="14">
    <citation type="journal article" date="2005" name="Proc. Natl. Acad. Sci. U.S.A.">
        <title>Composition and histone substrates of polycomb repressive group complexes change during cellular differentiation.</title>
        <authorList>
            <person name="Kuzmichev A."/>
            <person name="Margueron R."/>
            <person name="Vaquero A."/>
            <person name="Preissner T.S."/>
            <person name="Scher M."/>
            <person name="Kirmizis A."/>
            <person name="Ouyang X."/>
            <person name="Brockdorff N."/>
            <person name="Abate-Shen C."/>
            <person name="Farnham P.J."/>
            <person name="Reinberg D."/>
        </authorList>
    </citation>
    <scope>DEVELOPMENTAL STAGE</scope>
</reference>
<reference key="15">
    <citation type="journal article" date="2006" name="J. Biol. Chem.">
        <title>The polycomb group protein EZH2 is required for mammalian circadian clock function.</title>
        <authorList>
            <person name="Etchegaray J.P."/>
            <person name="Yang X."/>
            <person name="DeBruyne J.P."/>
            <person name="Peters A.H."/>
            <person name="Weaver D.R."/>
            <person name="Jenuwein T."/>
            <person name="Reppert S.M."/>
        </authorList>
    </citation>
    <scope>FUNCTION</scope>
    <scope>INTERACTION WITH CLOCK; BMAL1 AND CRY1</scope>
</reference>
<reference key="16">
    <citation type="journal article" date="2006" name="Nat. Cell Biol.">
        <title>The Polycomb group protein Eed protects the inactive X-chromosome from differentiation-induced reactivation.</title>
        <authorList>
            <person name="Kalantry S."/>
            <person name="Mills K.C."/>
            <person name="Yee D."/>
            <person name="Otte A.P."/>
            <person name="Panning B."/>
            <person name="Magnuson T."/>
        </authorList>
    </citation>
    <scope>SUBCELLULAR LOCATION</scope>
</reference>
<reference key="17">
    <citation type="journal article" date="2007" name="Genes Dev.">
        <title>The Polycomb group proteins bind throughout the INK4A-ARF locus and are disassociated in senescent cells.</title>
        <authorList>
            <person name="Bracken A.P."/>
            <person name="Kleine-Kohlbrecher D."/>
            <person name="Dietrich N."/>
            <person name="Pasini D."/>
            <person name="Gargiulo G."/>
            <person name="Beekman C."/>
            <person name="Theilgaard-Moench K."/>
            <person name="Minucci S."/>
            <person name="Porse B.T."/>
            <person name="Marine J.-C."/>
            <person name="Hansen K.H."/>
            <person name="Helin K."/>
        </authorList>
    </citation>
    <scope>DEVELOPMENTAL STAGE</scope>
</reference>
<reference key="18">
    <citation type="journal article" date="2007" name="J. Biol. Chem.">
        <title>Developmental regulation of Eed complex composition governs a switch in global histone modification in brain.</title>
        <authorList>
            <person name="Kim S.Y."/>
            <person name="Levenson J.M."/>
            <person name="Korsmeyer S."/>
            <person name="Sweatt J.D."/>
            <person name="Schumacher A."/>
        </authorList>
    </citation>
    <scope>INTERACTION WITH EED</scope>
</reference>
<reference key="19">
    <citation type="journal article" date="2008" name="J. Biol. Chem.">
        <title>MicroRNA-26a targets the histone methyltransferase Enhancer of Zeste homolog 2 during myogenesis.</title>
        <authorList>
            <person name="Wong C.F."/>
            <person name="Tellam R.L."/>
        </authorList>
    </citation>
    <scope>SUBCELLULAR LOCATION</scope>
    <scope>INDUCTION</scope>
</reference>
<reference key="20">
    <citation type="journal article" date="2008" name="Mol. Cell">
        <title>EZH1 mediates methylation on histone H3 lysine 27 and complements EZH2 in maintaining stem cell identity and executing pluripotency.</title>
        <authorList>
            <person name="Shen X."/>
            <person name="Liu Y."/>
            <person name="Hsu Y.-J."/>
            <person name="Fujiwara Y."/>
            <person name="Kim J."/>
            <person name="Mao X."/>
            <person name="Yuan G.-C."/>
            <person name="Orkin S.H."/>
        </authorList>
    </citation>
    <scope>FUNCTION</scope>
    <scope>IDENTIFICATION IN THE PRC2/EED-EZH1 COMPLEX</scope>
</reference>
<reference key="21">
    <citation type="journal article" date="2008" name="Mol. Cell">
        <title>Ezh1 and Ezh2 maintain repressive chromatin through different mechanisms.</title>
        <authorList>
            <person name="Margueron R."/>
            <person name="Li G."/>
            <person name="Sarma K."/>
            <person name="Blais A."/>
            <person name="Zavadil J."/>
            <person name="Woodcock C.L."/>
            <person name="Dynlacht B.D."/>
            <person name="Reinberg D."/>
        </authorList>
    </citation>
    <scope>TISSUE SPECIFICITY</scope>
</reference>
<reference key="22">
    <citation type="journal article" date="2008" name="Mol. Cell. Biol.">
        <title>Role of hPHF1 in H3K27 methylation and Hox gene silencing.</title>
        <authorList>
            <person name="Cao R."/>
            <person name="Wang H."/>
            <person name="He J."/>
            <person name="Erdjument-Bromage H."/>
            <person name="Tempst P."/>
            <person name="Zhang Y."/>
        </authorList>
    </citation>
    <scope>FUNCTION</scope>
</reference>
<reference key="23">
    <citation type="journal article" date="2010" name="Cell">
        <title>A tissue-specific atlas of mouse protein phosphorylation and expression.</title>
        <authorList>
            <person name="Huttlin E.L."/>
            <person name="Jedrychowski M.P."/>
            <person name="Elias J.E."/>
            <person name="Goswami T."/>
            <person name="Rad R."/>
            <person name="Beausoleil S.A."/>
            <person name="Villen J."/>
            <person name="Haas W."/>
            <person name="Sowa M.E."/>
            <person name="Gygi S.P."/>
        </authorList>
    </citation>
    <scope>PHOSPHORYLATION [LARGE SCALE ANALYSIS] AT SER-363; SER-366; THR-367 AND THR-487</scope>
    <scope>IDENTIFICATION BY MASS SPECTROMETRY [LARGE SCALE ANALYSIS]</scope>
    <source>
        <tissue>Kidney</tissue>
        <tissue>Lung</tissue>
        <tissue>Spleen</tissue>
    </source>
</reference>
<reference key="24">
    <citation type="journal article" date="2010" name="Cell Stem Cell">
        <title>Polycomb-like 2 associates with PRC2 and regulates transcriptional networks during mouse embryonic stem cell self-renewal and differentiation.</title>
        <authorList>
            <person name="Walker E."/>
            <person name="Chang W.Y."/>
            <person name="Hunkapiller J."/>
            <person name="Cagney G."/>
            <person name="Garcha K."/>
            <person name="Torchia J."/>
            <person name="Krogan N.J."/>
            <person name="Reiter J.F."/>
            <person name="Stanford W.L."/>
        </authorList>
    </citation>
    <scope>IDENTIFICATION IN THE PRC2 COMPLEX</scope>
</reference>
<reference key="25">
    <citation type="journal article" date="2013" name="Cell">
        <title>Dnmt3L antagonizes DNA methylation at bivalent promoters and favors DNA methylation at gene bodies in ESCs.</title>
        <authorList>
            <person name="Neri F."/>
            <person name="Krepelova A."/>
            <person name="Incarnato D."/>
            <person name="Maldotti M."/>
            <person name="Parlato C."/>
            <person name="Galvagni F."/>
            <person name="Matarese F."/>
            <person name="Stunnenberg H.G."/>
            <person name="Oliviero S."/>
        </authorList>
    </citation>
    <scope>INTERACTION WITH DNMT3L</scope>
</reference>
<reference key="26">
    <citation type="journal article" date="2013" name="Science">
        <title>Circadian gene Bmal1 regulates diurnal oscillations of Ly6C(hi) inflammatory monocytes.</title>
        <authorList>
            <person name="Nguyen K.D."/>
            <person name="Fentress S.J."/>
            <person name="Qiu Y."/>
            <person name="Yun K."/>
            <person name="Cox J.S."/>
            <person name="Chawla A."/>
        </authorList>
    </citation>
    <scope>INTERACTION WITH BMAL1</scope>
</reference>
<reference key="27">
    <citation type="journal article" date="2019" name="Nat. Commun.">
        <title>EZHIP constrains Polycomb Repressive Complex 2 activity in germ cells.</title>
        <authorList>
            <person name="Ragazzini R."/>
            <person name="Perez-Palacios R."/>
            <person name="Baymaz I.H."/>
            <person name="Diop S."/>
            <person name="Ancelin K."/>
            <person name="Zielinski D."/>
            <person name="Michaud A."/>
            <person name="Givelet M."/>
            <person name="Borsos M."/>
            <person name="Aflaki S."/>
            <person name="Legoix P."/>
            <person name="Jansen P.W.T.C."/>
            <person name="Servant N."/>
            <person name="Torres-Padilla M.E."/>
            <person name="Bourc'his D."/>
            <person name="Fouchet P."/>
            <person name="Vermeulen M."/>
            <person name="Margueron R."/>
        </authorList>
    </citation>
    <scope>INTERACTION WITH EZHIP</scope>
    <scope>TISSUE SPECIFICITY</scope>
</reference>
<reference key="28">
    <citation type="journal article" date="2020" name="Cell Rep.">
        <title>DEAD-Box Helicase 18 Counteracts PRC2 to Safeguard Ribosomal DNA in Pluripotency Regulation.</title>
        <authorList>
            <person name="Zhang H."/>
            <person name="Wu Z."/>
            <person name="Lu J.Y."/>
            <person name="Huang B."/>
            <person name="Zhou H."/>
            <person name="Xie W."/>
            <person name="Wang J."/>
            <person name="Shen X."/>
        </authorList>
    </citation>
    <scope>FUNCTION</scope>
    <scope>INTERACTION WITH DDX18</scope>
</reference>
<reference key="29">
    <citation type="journal article" date="2007" name="Structure">
        <title>Structural basis of EZH2 recognition by EED.</title>
        <authorList>
            <person name="Han Z."/>
            <person name="Xing X."/>
            <person name="Hu M."/>
            <person name="Zhang Y."/>
            <person name="Liu P."/>
            <person name="Chai J."/>
        </authorList>
    </citation>
    <scope>X-RAY CRYSTALLOGRAPHY (1.82 ANGSTROMS) OF 39-68 IN COMPLEX WITH EED</scope>
    <scope>INTERACTION WITH EED</scope>
    <scope>MUTAGENESIS OF PHE-42; ASN-45; ILE-49; LEU-56; PRO-67 AND VAL-68</scope>
</reference>
<gene>
    <name evidence="27" type="primary">Ezh2</name>
    <name type="synonym">Enx1h</name>
</gene>
<feature type="chain" id="PRO_0000213993" description="Histone-lysine N-methyltransferase EZH2">
    <location>
        <begin position="1"/>
        <end position="746"/>
    </location>
</feature>
<feature type="domain" description="CXC" evidence="4">
    <location>
        <begin position="503"/>
        <end position="605"/>
    </location>
</feature>
<feature type="domain" description="SET" evidence="3">
    <location>
        <begin position="612"/>
        <end position="727"/>
    </location>
</feature>
<feature type="region of interest" description="Interaction with DNMT1, DNMT3A and DNMT3B" evidence="1">
    <location>
        <begin position="1"/>
        <end position="340"/>
    </location>
</feature>
<feature type="region of interest" description="Interaction with EED">
    <location>
        <begin position="39"/>
        <end position="68"/>
    </location>
</feature>
<feature type="region of interest" description="Disordered" evidence="5">
    <location>
        <begin position="180"/>
        <end position="217"/>
    </location>
</feature>
<feature type="region of interest" description="Interaction with CDYL" evidence="1">
    <location>
        <begin position="329"/>
        <end position="522"/>
    </location>
</feature>
<feature type="region of interest" description="Disordered" evidence="5">
    <location>
        <begin position="340"/>
        <end position="426"/>
    </location>
</feature>
<feature type="compositionally biased region" description="Acidic residues" evidence="5">
    <location>
        <begin position="182"/>
        <end position="195"/>
    </location>
</feature>
<feature type="compositionally biased region" description="Basic and acidic residues" evidence="5">
    <location>
        <begin position="196"/>
        <end position="217"/>
    </location>
</feature>
<feature type="compositionally biased region" description="Basic residues" evidence="5">
    <location>
        <begin position="345"/>
        <end position="357"/>
    </location>
</feature>
<feature type="compositionally biased region" description="Basic and acidic residues" evidence="5">
    <location>
        <begin position="374"/>
        <end position="385"/>
    </location>
</feature>
<feature type="modified residue" description="Phosphoserine; by PKB/AKT1" evidence="2">
    <location>
        <position position="21"/>
    </location>
</feature>
<feature type="modified residue" description="Phosphoserine" evidence="2">
    <location>
        <position position="76"/>
    </location>
</feature>
<feature type="modified residue" description="Phosphothreonine" evidence="2">
    <location>
        <position position="339"/>
    </location>
</feature>
<feature type="modified residue" description="Phosphothreonine; by CDK1 and CDK2" evidence="2">
    <location>
        <position position="345"/>
    </location>
</feature>
<feature type="modified residue" description="Phosphoserine" evidence="28">
    <location>
        <position position="363"/>
    </location>
</feature>
<feature type="modified residue" description="Phosphoserine" evidence="28">
    <location>
        <position position="366"/>
    </location>
</feature>
<feature type="modified residue" description="Phosphothreonine" evidence="28">
    <location>
        <position position="367"/>
    </location>
</feature>
<feature type="modified residue" description="Phosphothreonine" evidence="28">
    <location>
        <position position="487"/>
    </location>
</feature>
<feature type="glycosylation site" description="O-linked (GlcNAc) serine" evidence="1">
    <location>
        <position position="75"/>
    </location>
</feature>
<feature type="cross-link" description="Glycyl lysine isopeptide (Lys-Gly) (interchain with G-Cter in SUMO2)" evidence="2">
    <location>
        <position position="634"/>
    </location>
</feature>
<feature type="splice variant" id="VSP_001501" description="In isoform ENX-1B." evidence="26">
    <original>DGSSNHVYNYQPCDHPRQPCDSSCPCVIAQNFCEKFCQCSSEC</original>
    <variation>G</variation>
    <location>
        <begin position="511"/>
        <end position="553"/>
    </location>
</feature>
<feature type="mutagenesis site" description="Abrogates interaction with EED." evidence="15">
    <original>F</original>
    <variation>D</variation>
    <location>
        <position position="42"/>
    </location>
</feature>
<feature type="mutagenesis site" description="Abrogates interaction with EED." evidence="15">
    <original>N</original>
    <variation>A</variation>
    <location>
        <position position="45"/>
    </location>
</feature>
<feature type="mutagenesis site" description="Abrogates interaction with EED." evidence="15">
    <original>I</original>
    <variation>E</variation>
    <location>
        <position position="49"/>
    </location>
</feature>
<feature type="mutagenesis site" description="Abrogates interaction with EED." evidence="15">
    <original>L</original>
    <variation>E</variation>
    <location>
        <position position="56"/>
    </location>
</feature>
<feature type="mutagenesis site" description="Abrogates interaction with EED." evidence="15">
    <original>P</original>
    <variation>D</variation>
    <location>
        <position position="67"/>
    </location>
</feature>
<feature type="mutagenesis site" description="Abrogates interaction with EED." evidence="15">
    <original>V</original>
    <variation>E</variation>
    <location>
        <position position="68"/>
    </location>
</feature>
<feature type="sequence conflict" description="In Ref. 4; AAD54020." evidence="26" ref="4">
    <location>
        <begin position="159"/>
        <end position="161"/>
    </location>
</feature>
<feature type="sequence conflict" description="In Ref. 1; AAC52655." evidence="26" ref="1">
    <original>A</original>
    <variation>D</variation>
    <location>
        <position position="651"/>
    </location>
</feature>
<feature type="helix" evidence="29">
    <location>
        <begin position="41"/>
        <end position="62"/>
    </location>
</feature>
<evidence type="ECO:0000250" key="1"/>
<evidence type="ECO:0000250" key="2">
    <source>
        <dbReference type="UniProtKB" id="Q15910"/>
    </source>
</evidence>
<evidence type="ECO:0000255" key="3">
    <source>
        <dbReference type="PROSITE-ProRule" id="PRU00190"/>
    </source>
</evidence>
<evidence type="ECO:0000255" key="4">
    <source>
        <dbReference type="PROSITE-ProRule" id="PRU00970"/>
    </source>
</evidence>
<evidence type="ECO:0000256" key="5">
    <source>
        <dbReference type="SAM" id="MobiDB-lite"/>
    </source>
</evidence>
<evidence type="ECO:0000269" key="6">
    <source>
    </source>
</evidence>
<evidence type="ECO:0000269" key="7">
    <source>
    </source>
</evidence>
<evidence type="ECO:0000269" key="8">
    <source>
    </source>
</evidence>
<evidence type="ECO:0000269" key="9">
    <source>
    </source>
</evidence>
<evidence type="ECO:0000269" key="10">
    <source>
    </source>
</evidence>
<evidence type="ECO:0000269" key="11">
    <source>
    </source>
</evidence>
<evidence type="ECO:0000269" key="12">
    <source>
    </source>
</evidence>
<evidence type="ECO:0000269" key="13">
    <source>
    </source>
</evidence>
<evidence type="ECO:0000269" key="14">
    <source>
    </source>
</evidence>
<evidence type="ECO:0000269" key="15">
    <source>
    </source>
</evidence>
<evidence type="ECO:0000269" key="16">
    <source>
    </source>
</evidence>
<evidence type="ECO:0000269" key="17">
    <source>
    </source>
</evidence>
<evidence type="ECO:0000269" key="18">
    <source>
    </source>
</evidence>
<evidence type="ECO:0000269" key="19">
    <source>
    </source>
</evidence>
<evidence type="ECO:0000269" key="20">
    <source>
    </source>
</evidence>
<evidence type="ECO:0000269" key="21">
    <source>
    </source>
</evidence>
<evidence type="ECO:0000269" key="22">
    <source>
    </source>
</evidence>
<evidence type="ECO:0000269" key="23">
    <source>
    </source>
</evidence>
<evidence type="ECO:0000269" key="24">
    <source>
    </source>
</evidence>
<evidence type="ECO:0000269" key="25">
    <source>
    </source>
</evidence>
<evidence type="ECO:0000305" key="26"/>
<evidence type="ECO:0000312" key="27">
    <source>
        <dbReference type="MGI" id="MGI:107940"/>
    </source>
</evidence>
<evidence type="ECO:0007744" key="28">
    <source>
    </source>
</evidence>
<evidence type="ECO:0007829" key="29">
    <source>
        <dbReference type="PDB" id="2QXV"/>
    </source>
</evidence>
<name>EZH2_MOUSE</name>
<organism>
    <name type="scientific">Mus musculus</name>
    <name type="common">Mouse</name>
    <dbReference type="NCBI Taxonomy" id="10090"/>
    <lineage>
        <taxon>Eukaryota</taxon>
        <taxon>Metazoa</taxon>
        <taxon>Chordata</taxon>
        <taxon>Craniata</taxon>
        <taxon>Vertebrata</taxon>
        <taxon>Euteleostomi</taxon>
        <taxon>Mammalia</taxon>
        <taxon>Eutheria</taxon>
        <taxon>Euarchontoglires</taxon>
        <taxon>Glires</taxon>
        <taxon>Rodentia</taxon>
        <taxon>Myomorpha</taxon>
        <taxon>Muroidea</taxon>
        <taxon>Muridae</taxon>
        <taxon>Murinae</taxon>
        <taxon>Mus</taxon>
        <taxon>Mus</taxon>
    </lineage>
</organism>
<sequence length="746" mass="85292">MGQTGKKSEKGPVCWRKRVKSEYMRLRQLKRFRRADEVKTMFSSNRQKILERTETLNQEWKQRRIQPVHIMTSVSSLRGTRECSVTSDLDFPAQVIPLKTLNAVASVPIMYSWSPLQQNFMVEDETVLHNIPYMGDEVLDQDGTFIEELIKNYDGKVHGDRECGFINDEIFVELVNALGQYNDDDDDDDGDDPDEREEKQKDLEDNRDDKETCPPRKFPADKIFEAISSMFPDKGTAEELKEKYKELTEQQLPGALPPECTPNIDGPNAKSVQREQSLHSFHTLFCRRCFKYDCFLHPFHATPNTYKRKNTETALDNKPCGPQCYQHLEGAKEFAAALTAERIKTPPKRPGGRRRGRLPNNSSRPSTPTISVLESKDTDSDREAGTETGGENNDKEEEEKKDETSSSSEANSRCQTPIKMKPNIEPPENVEWSGAEASMFRVLIGTYYDNFCAIARLIGTKTCRQVYEFRVKESSIIAPVPTEDVDTPPRKKKRKHRLWAAHCRKIQLKKDGSSNHVYNYQPCDHPRQPCDSSCPCVIAQNFCEKFCQCSSECQNRFPGCRCKAQCNTKQCPCYLAVRECDPDLCLTCGAADHWDSKNVSCKNCSIQRGSKKHLLLAPSDVAGWGIFIKDPVQKNEFISEYCGEIISQDEADRRGKVYDKYMCSFLFNLNNDFVVDATRKGNKIRFANHSVNPNCYAKVMMVNGDHRIGIFAKRAIQTGEELFFDYRYSQADALKYVGIEREMEIP</sequence>
<proteinExistence type="evidence at protein level"/>
<accession>Q61188</accession>
<accession>Q99L74</accession>
<accession>Q9R090</accession>
<dbReference type="EC" id="2.1.1.356" evidence="2"/>
<dbReference type="EMBL" id="U52951">
    <property type="protein sequence ID" value="AAC52655.1"/>
    <property type="molecule type" value="mRNA"/>
</dbReference>
<dbReference type="EMBL" id="CH466533">
    <property type="protein sequence ID" value="EDL13435.1"/>
    <property type="molecule type" value="Genomic_DNA"/>
</dbReference>
<dbReference type="EMBL" id="BC003772">
    <property type="protein sequence ID" value="AAH03772.1"/>
    <property type="molecule type" value="mRNA"/>
</dbReference>
<dbReference type="EMBL" id="BC016391">
    <property type="protein sequence ID" value="AAH16391.1"/>
    <property type="molecule type" value="mRNA"/>
</dbReference>
<dbReference type="EMBL" id="AF104359">
    <property type="protein sequence ID" value="AAD54020.1"/>
    <property type="status" value="ALT_SEQ"/>
    <property type="molecule type" value="Genomic_DNA"/>
</dbReference>
<dbReference type="CCDS" id="CCDS20096.1">
    <molecule id="Q61188-1"/>
</dbReference>
<dbReference type="RefSeq" id="NP_001396742.1">
    <molecule id="Q61188-1"/>
    <property type="nucleotide sequence ID" value="NM_001409813.1"/>
</dbReference>
<dbReference type="RefSeq" id="NP_001396743.1">
    <molecule id="Q61188-1"/>
    <property type="nucleotide sequence ID" value="NM_001409814.1"/>
</dbReference>
<dbReference type="RefSeq" id="NP_001396744.1">
    <molecule id="Q61188-1"/>
    <property type="nucleotide sequence ID" value="NM_001409815.1"/>
</dbReference>
<dbReference type="RefSeq" id="NP_001396745.1">
    <molecule id="Q61188-1"/>
    <property type="nucleotide sequence ID" value="NM_001409816.1"/>
</dbReference>
<dbReference type="RefSeq" id="NP_001396746.1">
    <molecule id="Q61188-1"/>
    <property type="nucleotide sequence ID" value="NM_001409817.1"/>
</dbReference>
<dbReference type="RefSeq" id="NP_001396752.1">
    <molecule id="Q61188-2"/>
    <property type="nucleotide sequence ID" value="NM_001409823.1"/>
</dbReference>
<dbReference type="RefSeq" id="NP_001396753.1">
    <molecule id="Q61188-2"/>
    <property type="nucleotide sequence ID" value="NM_001409824.1"/>
</dbReference>
<dbReference type="RefSeq" id="NP_001396754.1">
    <molecule id="Q61188-2"/>
    <property type="nucleotide sequence ID" value="NM_001409825.1"/>
</dbReference>
<dbReference type="RefSeq" id="NP_001396755.1">
    <molecule id="Q61188-2"/>
    <property type="nucleotide sequence ID" value="NM_001409826.1"/>
</dbReference>
<dbReference type="RefSeq" id="NP_001396756.1">
    <molecule id="Q61188-2"/>
    <property type="nucleotide sequence ID" value="NM_001409827.1"/>
</dbReference>
<dbReference type="RefSeq" id="NP_001396757.1">
    <molecule id="Q61188-2"/>
    <property type="nucleotide sequence ID" value="NM_001409828.1"/>
</dbReference>
<dbReference type="RefSeq" id="NP_031997.2">
    <molecule id="Q61188-1"/>
    <property type="nucleotide sequence ID" value="NM_007971.2"/>
</dbReference>
<dbReference type="RefSeq" id="XP_036021713.1">
    <molecule id="Q61188-1"/>
    <property type="nucleotide sequence ID" value="XM_036165820.1"/>
</dbReference>
<dbReference type="RefSeq" id="XP_036021715.1">
    <molecule id="Q61188-1"/>
    <property type="nucleotide sequence ID" value="XM_036165822.1"/>
</dbReference>
<dbReference type="PDB" id="2QXV">
    <property type="method" value="X-ray"/>
    <property type="resolution" value="1.82 A"/>
    <property type="chains" value="B=39-68"/>
</dbReference>
<dbReference type="PDBsum" id="2QXV"/>
<dbReference type="SMR" id="Q61188"/>
<dbReference type="BioGRID" id="199564">
    <property type="interactions" value="65"/>
</dbReference>
<dbReference type="CORUM" id="Q61188"/>
<dbReference type="DIP" id="DIP-29524N"/>
<dbReference type="FunCoup" id="Q61188">
    <property type="interactions" value="3734"/>
</dbReference>
<dbReference type="IntAct" id="Q61188">
    <property type="interactions" value="30"/>
</dbReference>
<dbReference type="MINT" id="Q61188"/>
<dbReference type="STRING" id="10090.ENSMUSP00000080419"/>
<dbReference type="GlyCosmos" id="Q61188">
    <property type="glycosylation" value="1 site, No reported glycans"/>
</dbReference>
<dbReference type="GlyGen" id="Q61188">
    <property type="glycosylation" value="2 sites, 1 O-linked glycan (1 site)"/>
</dbReference>
<dbReference type="iPTMnet" id="Q61188"/>
<dbReference type="PhosphoSitePlus" id="Q61188"/>
<dbReference type="jPOST" id="Q61188"/>
<dbReference type="PaxDb" id="10090-ENSMUSP00000080419"/>
<dbReference type="PeptideAtlas" id="Q61188"/>
<dbReference type="ProteomicsDB" id="275811">
    <molecule id="Q61188-1"/>
</dbReference>
<dbReference type="ProteomicsDB" id="275812">
    <molecule id="Q61188-2"/>
</dbReference>
<dbReference type="Pumba" id="Q61188"/>
<dbReference type="Antibodypedia" id="32761">
    <property type="antibodies" value="931 antibodies from 45 providers"/>
</dbReference>
<dbReference type="DNASU" id="14056"/>
<dbReference type="Ensembl" id="ENSMUST00000081721.13">
    <molecule id="Q61188-1"/>
    <property type="protein sequence ID" value="ENSMUSP00000080419.7"/>
    <property type="gene ID" value="ENSMUSG00000029687.17"/>
</dbReference>
<dbReference type="Ensembl" id="ENSMUST00000092648.13">
    <molecule id="Q61188-2"/>
    <property type="protein sequence ID" value="ENSMUSP00000090318.7"/>
    <property type="gene ID" value="ENSMUSG00000029687.17"/>
</dbReference>
<dbReference type="GeneID" id="14056"/>
<dbReference type="KEGG" id="mmu:14056"/>
<dbReference type="UCSC" id="uc009btb.2">
    <molecule id="Q61188-1"/>
    <property type="organism name" value="mouse"/>
</dbReference>
<dbReference type="AGR" id="MGI:107940"/>
<dbReference type="CTD" id="2146"/>
<dbReference type="MGI" id="MGI:107940">
    <property type="gene designation" value="Ezh2"/>
</dbReference>
<dbReference type="VEuPathDB" id="HostDB:ENSMUSG00000029687"/>
<dbReference type="eggNOG" id="KOG1079">
    <property type="taxonomic scope" value="Eukaryota"/>
</dbReference>
<dbReference type="GeneTree" id="ENSGT00940000155013"/>
<dbReference type="InParanoid" id="Q61188"/>
<dbReference type="OMA" id="GNSCYML"/>
<dbReference type="OrthoDB" id="6141102at2759"/>
<dbReference type="PhylomeDB" id="Q61188"/>
<dbReference type="TreeFam" id="TF314509"/>
<dbReference type="BRENDA" id="2.1.1.356">
    <property type="organism ID" value="3474"/>
</dbReference>
<dbReference type="Reactome" id="R-MMU-212300">
    <property type="pathway name" value="PRC2 methylates histones and DNA"/>
</dbReference>
<dbReference type="Reactome" id="R-MMU-2559580">
    <property type="pathway name" value="Oxidative Stress Induced Senescence"/>
</dbReference>
<dbReference type="Reactome" id="R-MMU-3214841">
    <property type="pathway name" value="PKMTs methylate histone lysines"/>
</dbReference>
<dbReference type="Reactome" id="R-MMU-8953750">
    <property type="pathway name" value="Transcriptional Regulation by E2F6"/>
</dbReference>
<dbReference type="BioGRID-ORCS" id="14056">
    <property type="hits" value="8 hits in 89 CRISPR screens"/>
</dbReference>
<dbReference type="ChiTaRS" id="Ezh2">
    <property type="organism name" value="mouse"/>
</dbReference>
<dbReference type="EvolutionaryTrace" id="Q61188"/>
<dbReference type="PRO" id="PR:Q61188"/>
<dbReference type="Proteomes" id="UP000000589">
    <property type="component" value="Chromosome 6"/>
</dbReference>
<dbReference type="RNAct" id="Q61188">
    <property type="molecule type" value="protein"/>
</dbReference>
<dbReference type="Bgee" id="ENSMUSG00000029687">
    <property type="expression patterns" value="Expressed in embryonic post-anal tail and 245 other cell types or tissues"/>
</dbReference>
<dbReference type="ExpressionAtlas" id="Q61188">
    <property type="expression patterns" value="baseline and differential"/>
</dbReference>
<dbReference type="GO" id="GO:0005677">
    <property type="term" value="C:chromatin silencing complex"/>
    <property type="evidence" value="ECO:0000314"/>
    <property type="project" value="MGI"/>
</dbReference>
<dbReference type="GO" id="GO:0000781">
    <property type="term" value="C:chromosome, telomeric region"/>
    <property type="evidence" value="ECO:0007669"/>
    <property type="project" value="Ensembl"/>
</dbReference>
<dbReference type="GO" id="GO:0035098">
    <property type="term" value="C:ESC/E(Z) complex"/>
    <property type="evidence" value="ECO:0000314"/>
    <property type="project" value="UniProtKB"/>
</dbReference>
<dbReference type="GO" id="GO:0005654">
    <property type="term" value="C:nucleoplasm"/>
    <property type="evidence" value="ECO:0000304"/>
    <property type="project" value="Reactome"/>
</dbReference>
<dbReference type="GO" id="GO:0005634">
    <property type="term" value="C:nucleus"/>
    <property type="evidence" value="ECO:0000314"/>
    <property type="project" value="MGI"/>
</dbReference>
<dbReference type="GO" id="GO:0005721">
    <property type="term" value="C:pericentric heterochromatin"/>
    <property type="evidence" value="ECO:0000314"/>
    <property type="project" value="MGI"/>
</dbReference>
<dbReference type="GO" id="GO:0045120">
    <property type="term" value="C:pronucleus"/>
    <property type="evidence" value="ECO:0000314"/>
    <property type="project" value="MGI"/>
</dbReference>
<dbReference type="GO" id="GO:0045202">
    <property type="term" value="C:synapse"/>
    <property type="evidence" value="ECO:0007669"/>
    <property type="project" value="GOC"/>
</dbReference>
<dbReference type="GO" id="GO:0003682">
    <property type="term" value="F:chromatin binding"/>
    <property type="evidence" value="ECO:0000314"/>
    <property type="project" value="MGI"/>
</dbReference>
<dbReference type="GO" id="GO:0031490">
    <property type="term" value="F:chromatin DNA binding"/>
    <property type="evidence" value="ECO:0000314"/>
    <property type="project" value="MGI"/>
</dbReference>
<dbReference type="GO" id="GO:0003677">
    <property type="term" value="F:DNA binding"/>
    <property type="evidence" value="ECO:0000314"/>
    <property type="project" value="MGI"/>
</dbReference>
<dbReference type="GO" id="GO:0042393">
    <property type="term" value="F:histone binding"/>
    <property type="evidence" value="ECO:0007669"/>
    <property type="project" value="Ensembl"/>
</dbReference>
<dbReference type="GO" id="GO:0046976">
    <property type="term" value="F:histone H3K27 methyltransferase activity"/>
    <property type="evidence" value="ECO:0000315"/>
    <property type="project" value="UniProtKB"/>
</dbReference>
<dbReference type="GO" id="GO:0140951">
    <property type="term" value="F:histone H3K27 trimethyltransferase activity"/>
    <property type="evidence" value="ECO:0007669"/>
    <property type="project" value="UniProtKB-EC"/>
</dbReference>
<dbReference type="GO" id="GO:0042054">
    <property type="term" value="F:histone methyltransferase activity"/>
    <property type="evidence" value="ECO:0000314"/>
    <property type="project" value="MGI"/>
</dbReference>
<dbReference type="GO" id="GO:0106222">
    <property type="term" value="F:lncRNA binding"/>
    <property type="evidence" value="ECO:0000314"/>
    <property type="project" value="MGI"/>
</dbReference>
<dbReference type="GO" id="GO:0031491">
    <property type="term" value="F:nucleosome binding"/>
    <property type="evidence" value="ECO:0007669"/>
    <property type="project" value="Ensembl"/>
</dbReference>
<dbReference type="GO" id="GO:0070878">
    <property type="term" value="F:primary miRNA binding"/>
    <property type="evidence" value="ECO:0000314"/>
    <property type="project" value="MGI"/>
</dbReference>
<dbReference type="GO" id="GO:1990841">
    <property type="term" value="F:promoter-specific chromatin binding"/>
    <property type="evidence" value="ECO:0000250"/>
    <property type="project" value="UniProtKB"/>
</dbReference>
<dbReference type="GO" id="GO:0016279">
    <property type="term" value="F:protein-lysine N-methyltransferase activity"/>
    <property type="evidence" value="ECO:0000314"/>
    <property type="project" value="MGI"/>
</dbReference>
<dbReference type="GO" id="GO:0043021">
    <property type="term" value="F:ribonucleoprotein complex binding"/>
    <property type="evidence" value="ECO:0000314"/>
    <property type="project" value="MGI"/>
</dbReference>
<dbReference type="GO" id="GO:0003723">
    <property type="term" value="F:RNA binding"/>
    <property type="evidence" value="ECO:0000314"/>
    <property type="project" value="MGI"/>
</dbReference>
<dbReference type="GO" id="GO:0000978">
    <property type="term" value="F:RNA polymerase II cis-regulatory region sequence-specific DNA binding"/>
    <property type="evidence" value="ECO:0000314"/>
    <property type="project" value="MGI"/>
</dbReference>
<dbReference type="GO" id="GO:0000979">
    <property type="term" value="F:RNA polymerase II core promoter sequence-specific DNA binding"/>
    <property type="evidence" value="ECO:0000314"/>
    <property type="project" value="MGI"/>
</dbReference>
<dbReference type="GO" id="GO:0043565">
    <property type="term" value="F:sequence-specific DNA binding"/>
    <property type="evidence" value="ECO:0000314"/>
    <property type="project" value="MGI"/>
</dbReference>
<dbReference type="GO" id="GO:0003714">
    <property type="term" value="F:transcription corepressor activity"/>
    <property type="evidence" value="ECO:0000314"/>
    <property type="project" value="ARUK-UCL"/>
</dbReference>
<dbReference type="GO" id="GO:0001222">
    <property type="term" value="F:transcription corepressor binding"/>
    <property type="evidence" value="ECO:0007669"/>
    <property type="project" value="Ensembl"/>
</dbReference>
<dbReference type="GO" id="GO:0030183">
    <property type="term" value="P:B cell differentiation"/>
    <property type="evidence" value="ECO:0000315"/>
    <property type="project" value="MGI"/>
</dbReference>
<dbReference type="GO" id="GO:0014898">
    <property type="term" value="P:cardiac muscle hypertrophy in response to stress"/>
    <property type="evidence" value="ECO:0000314"/>
    <property type="project" value="MGI"/>
</dbReference>
<dbReference type="GO" id="GO:0070301">
    <property type="term" value="P:cellular response to hydrogen peroxide"/>
    <property type="evidence" value="ECO:0000314"/>
    <property type="project" value="MGI"/>
</dbReference>
<dbReference type="GO" id="GO:0035984">
    <property type="term" value="P:cellular response to trichostatin A"/>
    <property type="evidence" value="ECO:0000315"/>
    <property type="project" value="MGI"/>
</dbReference>
<dbReference type="GO" id="GO:0021695">
    <property type="term" value="P:cerebellar cortex development"/>
    <property type="evidence" value="ECO:0000315"/>
    <property type="project" value="MGI"/>
</dbReference>
<dbReference type="GO" id="GO:0006346">
    <property type="term" value="P:DNA methylation-dependent constitutive heterochromatin formation"/>
    <property type="evidence" value="ECO:0000315"/>
    <property type="project" value="MGI"/>
</dbReference>
<dbReference type="GO" id="GO:0009913">
    <property type="term" value="P:epidermal cell differentiation"/>
    <property type="evidence" value="ECO:0000315"/>
    <property type="project" value="MGI"/>
</dbReference>
<dbReference type="GO" id="GO:0140718">
    <property type="term" value="P:facultative heterochromatin formation"/>
    <property type="evidence" value="ECO:0000314"/>
    <property type="project" value="GO_Central"/>
</dbReference>
<dbReference type="GO" id="GO:0070314">
    <property type="term" value="P:G1 to G0 transition"/>
    <property type="evidence" value="ECO:0000315"/>
    <property type="project" value="MGI"/>
</dbReference>
<dbReference type="GO" id="GO:0000082">
    <property type="term" value="P:G1/S transition of mitotic cell cycle"/>
    <property type="evidence" value="ECO:0000315"/>
    <property type="project" value="MGI"/>
</dbReference>
<dbReference type="GO" id="GO:0030097">
    <property type="term" value="P:hemopoiesis"/>
    <property type="evidence" value="ECO:0000315"/>
    <property type="project" value="MGI"/>
</dbReference>
<dbReference type="GO" id="GO:0036333">
    <property type="term" value="P:hepatocyte homeostasis"/>
    <property type="evidence" value="ECO:0000316"/>
    <property type="project" value="MGI"/>
</dbReference>
<dbReference type="GO" id="GO:0021766">
    <property type="term" value="P:hippocampus development"/>
    <property type="evidence" value="ECO:0007669"/>
    <property type="project" value="Ensembl"/>
</dbReference>
<dbReference type="GO" id="GO:0071707">
    <property type="term" value="P:immunoglobulin heavy chain V-D-J recombination"/>
    <property type="evidence" value="ECO:0000304"/>
    <property type="project" value="MGI"/>
</dbReference>
<dbReference type="GO" id="GO:0030216">
    <property type="term" value="P:keratinocyte differentiation"/>
    <property type="evidence" value="ECO:0000315"/>
    <property type="project" value="MGI"/>
</dbReference>
<dbReference type="GO" id="GO:0097421">
    <property type="term" value="P:liver regeneration"/>
    <property type="evidence" value="ECO:0000316"/>
    <property type="project" value="MGI"/>
</dbReference>
<dbReference type="GO" id="GO:0032259">
    <property type="term" value="P:methylation"/>
    <property type="evidence" value="ECO:0007669"/>
    <property type="project" value="UniProtKB-KW"/>
</dbReference>
<dbReference type="GO" id="GO:1900016">
    <property type="term" value="P:negative regulation of cytokine production involved in inflammatory response"/>
    <property type="evidence" value="ECO:0007669"/>
    <property type="project" value="Ensembl"/>
</dbReference>
<dbReference type="GO" id="GO:0045892">
    <property type="term" value="P:negative regulation of DNA-templated transcription"/>
    <property type="evidence" value="ECO:0000250"/>
    <property type="project" value="UniProtKB"/>
</dbReference>
<dbReference type="GO" id="GO:0045605">
    <property type="term" value="P:negative regulation of epidermal cell differentiation"/>
    <property type="evidence" value="ECO:0000315"/>
    <property type="project" value="MGI"/>
</dbReference>
<dbReference type="GO" id="GO:2000134">
    <property type="term" value="P:negative regulation of G1/S transition of mitotic cell cycle"/>
    <property type="evidence" value="ECO:0000315"/>
    <property type="project" value="MGI"/>
</dbReference>
<dbReference type="GO" id="GO:0045814">
    <property type="term" value="P:negative regulation of gene expression, epigenetic"/>
    <property type="evidence" value="ECO:0000250"/>
    <property type="project" value="UniProtKB"/>
</dbReference>
<dbReference type="GO" id="GO:0045617">
    <property type="term" value="P:negative regulation of keratinocyte differentiation"/>
    <property type="evidence" value="ECO:0000315"/>
    <property type="project" value="MGI"/>
</dbReference>
<dbReference type="GO" id="GO:0048387">
    <property type="term" value="P:negative regulation of retinoic acid receptor signaling pathway"/>
    <property type="evidence" value="ECO:0000250"/>
    <property type="project" value="UniProtKB"/>
</dbReference>
<dbReference type="GO" id="GO:2000737">
    <property type="term" value="P:negative regulation of stem cell differentiation"/>
    <property type="evidence" value="ECO:0000315"/>
    <property type="project" value="MGI"/>
</dbReference>
<dbReference type="GO" id="GO:0051154">
    <property type="term" value="P:negative regulation of striated muscle cell differentiation"/>
    <property type="evidence" value="ECO:0000314"/>
    <property type="project" value="MGI"/>
</dbReference>
<dbReference type="GO" id="GO:0000122">
    <property type="term" value="P:negative regulation of transcription by RNA polymerase II"/>
    <property type="evidence" value="ECO:0000314"/>
    <property type="project" value="MGI"/>
</dbReference>
<dbReference type="GO" id="GO:0034244">
    <property type="term" value="P:negative regulation of transcription elongation by RNA polymerase II"/>
    <property type="evidence" value="ECO:0000315"/>
    <property type="project" value="MGI"/>
</dbReference>
<dbReference type="GO" id="GO:1902808">
    <property type="term" value="P:positive regulation of cell cycle G1/S phase transition"/>
    <property type="evidence" value="ECO:0007669"/>
    <property type="project" value="Ensembl"/>
</dbReference>
<dbReference type="GO" id="GO:0030335">
    <property type="term" value="P:positive regulation of cell migration"/>
    <property type="evidence" value="ECO:0007669"/>
    <property type="project" value="Ensembl"/>
</dbReference>
<dbReference type="GO" id="GO:0008284">
    <property type="term" value="P:positive regulation of cell population proliferation"/>
    <property type="evidence" value="ECO:0007669"/>
    <property type="project" value="Ensembl"/>
</dbReference>
<dbReference type="GO" id="GO:1900006">
    <property type="term" value="P:positive regulation of dendrite development"/>
    <property type="evidence" value="ECO:0007669"/>
    <property type="project" value="Ensembl"/>
</dbReference>
<dbReference type="GO" id="GO:0010718">
    <property type="term" value="P:positive regulation of epithelial to mesenchymal transition"/>
    <property type="evidence" value="ECO:0000250"/>
    <property type="project" value="UniProtKB"/>
</dbReference>
<dbReference type="GO" id="GO:0043547">
    <property type="term" value="P:positive regulation of GTPase activity"/>
    <property type="evidence" value="ECO:0000250"/>
    <property type="project" value="UniProtKB"/>
</dbReference>
<dbReference type="GO" id="GO:0043406">
    <property type="term" value="P:positive regulation of MAP kinase activity"/>
    <property type="evidence" value="ECO:0000250"/>
    <property type="project" value="UniProtKB"/>
</dbReference>
<dbReference type="GO" id="GO:0071902">
    <property type="term" value="P:positive regulation of protein serine/threonine kinase activity"/>
    <property type="evidence" value="ECO:0000250"/>
    <property type="project" value="UniProtKB"/>
</dbReference>
<dbReference type="GO" id="GO:0071168">
    <property type="term" value="P:protein localization to chromatin"/>
    <property type="evidence" value="ECO:0000315"/>
    <property type="project" value="MGI"/>
</dbReference>
<dbReference type="GO" id="GO:0036211">
    <property type="term" value="P:protein modification process"/>
    <property type="evidence" value="ECO:0007669"/>
    <property type="project" value="Ensembl"/>
</dbReference>
<dbReference type="GO" id="GO:0042127">
    <property type="term" value="P:regulation of cell population proliferation"/>
    <property type="evidence" value="ECO:0000315"/>
    <property type="project" value="MGI"/>
</dbReference>
<dbReference type="GO" id="GO:0042752">
    <property type="term" value="P:regulation of circadian rhythm"/>
    <property type="evidence" value="ECO:0000315"/>
    <property type="project" value="UniProtKB"/>
</dbReference>
<dbReference type="GO" id="GO:0010468">
    <property type="term" value="P:regulation of gene expression"/>
    <property type="evidence" value="ECO:0000315"/>
    <property type="project" value="MGI"/>
</dbReference>
<dbReference type="GO" id="GO:0014013">
    <property type="term" value="P:regulation of gliogenesis"/>
    <property type="evidence" value="ECO:0000315"/>
    <property type="project" value="MGI"/>
</dbReference>
<dbReference type="GO" id="GO:0090183">
    <property type="term" value="P:regulation of kidney development"/>
    <property type="evidence" value="ECO:0007669"/>
    <property type="project" value="Ensembl"/>
</dbReference>
<dbReference type="GO" id="GO:0050767">
    <property type="term" value="P:regulation of neurogenesis"/>
    <property type="evidence" value="ECO:0000315"/>
    <property type="project" value="MGI"/>
</dbReference>
<dbReference type="GO" id="GO:0006357">
    <property type="term" value="P:regulation of transcription by RNA polymerase II"/>
    <property type="evidence" value="ECO:0000315"/>
    <property type="project" value="MGI"/>
</dbReference>
<dbReference type="GO" id="GO:0031048">
    <property type="term" value="P:regulatory ncRNA-mediated heterochromatin formation"/>
    <property type="evidence" value="ECO:0007669"/>
    <property type="project" value="Ensembl"/>
</dbReference>
<dbReference type="GO" id="GO:0032355">
    <property type="term" value="P:response to estradiol"/>
    <property type="evidence" value="ECO:0007669"/>
    <property type="project" value="Ensembl"/>
</dbReference>
<dbReference type="GO" id="GO:1904772">
    <property type="term" value="P:response to tetrachloromethane"/>
    <property type="evidence" value="ECO:0000316"/>
    <property type="project" value="MGI"/>
</dbReference>
<dbReference type="GO" id="GO:0048511">
    <property type="term" value="P:rhythmic process"/>
    <property type="evidence" value="ECO:0007669"/>
    <property type="project" value="UniProtKB-KW"/>
</dbReference>
<dbReference type="GO" id="GO:0014834">
    <property type="term" value="P:skeletal muscle satellite cell maintenance involved in skeletal muscle regeneration"/>
    <property type="evidence" value="ECO:0000315"/>
    <property type="project" value="MGI"/>
</dbReference>
<dbReference type="GO" id="GO:0048863">
    <property type="term" value="P:stem cell differentiation"/>
    <property type="evidence" value="ECO:0000315"/>
    <property type="project" value="MGI"/>
</dbReference>
<dbReference type="GO" id="GO:0031509">
    <property type="term" value="P:subtelomeric heterochromatin formation"/>
    <property type="evidence" value="ECO:0007669"/>
    <property type="project" value="Ensembl"/>
</dbReference>
<dbReference type="GO" id="GO:0051932">
    <property type="term" value="P:synaptic transmission, GABAergic"/>
    <property type="evidence" value="ECO:0007669"/>
    <property type="project" value="Ensembl"/>
</dbReference>
<dbReference type="CDD" id="cd00167">
    <property type="entry name" value="SANT"/>
    <property type="match status" value="1"/>
</dbReference>
<dbReference type="CDD" id="cd19218">
    <property type="entry name" value="SET_EZH2"/>
    <property type="match status" value="1"/>
</dbReference>
<dbReference type="FunFam" id="2.170.270.10:FF:000001">
    <property type="entry name" value="Putative histone-lysine N-methyltransferase EZH2"/>
    <property type="match status" value="1"/>
</dbReference>
<dbReference type="Gene3D" id="1.20.58.1880">
    <property type="match status" value="1"/>
</dbReference>
<dbReference type="Gene3D" id="2.170.270.10">
    <property type="entry name" value="SET domain"/>
    <property type="match status" value="1"/>
</dbReference>
<dbReference type="InterPro" id="IPR026489">
    <property type="entry name" value="CXC_dom"/>
</dbReference>
<dbReference type="InterPro" id="IPR045318">
    <property type="entry name" value="EZH1/2-like"/>
</dbReference>
<dbReference type="InterPro" id="IPR048358">
    <property type="entry name" value="EZH1/2_MCSS"/>
</dbReference>
<dbReference type="InterPro" id="IPR021654">
    <property type="entry name" value="EZH1/EZH2"/>
</dbReference>
<dbReference type="InterPro" id="IPR044439">
    <property type="entry name" value="EZH2_SET"/>
</dbReference>
<dbReference type="InterPro" id="IPR041343">
    <property type="entry name" value="PRC2_HTH_1"/>
</dbReference>
<dbReference type="InterPro" id="IPR041355">
    <property type="entry name" value="Pre-SET_CXC"/>
</dbReference>
<dbReference type="InterPro" id="IPR001005">
    <property type="entry name" value="SANT/Myb"/>
</dbReference>
<dbReference type="InterPro" id="IPR001214">
    <property type="entry name" value="SET_dom"/>
</dbReference>
<dbReference type="InterPro" id="IPR046341">
    <property type="entry name" value="SET_dom_sf"/>
</dbReference>
<dbReference type="InterPro" id="IPR033467">
    <property type="entry name" value="Tesmin/TSO1-like_CXC"/>
</dbReference>
<dbReference type="PANTHER" id="PTHR45747">
    <property type="entry name" value="HISTONE-LYSINE N-METHYLTRANSFERASE E(Z)"/>
    <property type="match status" value="1"/>
</dbReference>
<dbReference type="PANTHER" id="PTHR45747:SF3">
    <property type="entry name" value="HISTONE-LYSINE N-METHYLTRANSFERASE EZH2"/>
    <property type="match status" value="1"/>
</dbReference>
<dbReference type="Pfam" id="PF21358">
    <property type="entry name" value="Ezh2_MCSS"/>
    <property type="match status" value="1"/>
</dbReference>
<dbReference type="Pfam" id="PF11616">
    <property type="entry name" value="EZH2_WD-Binding"/>
    <property type="match status" value="1"/>
</dbReference>
<dbReference type="Pfam" id="PF18118">
    <property type="entry name" value="PRC2_HTH_1"/>
    <property type="match status" value="1"/>
</dbReference>
<dbReference type="Pfam" id="PF18264">
    <property type="entry name" value="preSET_CXC"/>
    <property type="match status" value="1"/>
</dbReference>
<dbReference type="Pfam" id="PF00856">
    <property type="entry name" value="SET"/>
    <property type="match status" value="1"/>
</dbReference>
<dbReference type="SMART" id="SM01114">
    <property type="entry name" value="CXC"/>
    <property type="match status" value="1"/>
</dbReference>
<dbReference type="SMART" id="SM00717">
    <property type="entry name" value="SANT"/>
    <property type="match status" value="2"/>
</dbReference>
<dbReference type="SMART" id="SM00317">
    <property type="entry name" value="SET"/>
    <property type="match status" value="1"/>
</dbReference>
<dbReference type="SUPFAM" id="SSF82199">
    <property type="entry name" value="SET domain"/>
    <property type="match status" value="1"/>
</dbReference>
<dbReference type="PROSITE" id="PS51633">
    <property type="entry name" value="CXC"/>
    <property type="match status" value="1"/>
</dbReference>
<dbReference type="PROSITE" id="PS50280">
    <property type="entry name" value="SET"/>
    <property type="match status" value="1"/>
</dbReference>
<keyword id="KW-0002">3D-structure</keyword>
<keyword id="KW-0025">Alternative splicing</keyword>
<keyword id="KW-0090">Biological rhythms</keyword>
<keyword id="KW-0156">Chromatin regulator</keyword>
<keyword id="KW-0158">Chromosome</keyword>
<keyword id="KW-0325">Glycoprotein</keyword>
<keyword id="KW-1017">Isopeptide bond</keyword>
<keyword id="KW-0489">Methyltransferase</keyword>
<keyword id="KW-0539">Nucleus</keyword>
<keyword id="KW-0597">Phosphoprotein</keyword>
<keyword id="KW-1185">Reference proteome</keyword>
<keyword id="KW-0678">Repressor</keyword>
<keyword id="KW-0949">S-adenosyl-L-methionine</keyword>
<keyword id="KW-0804">Transcription</keyword>
<keyword id="KW-0805">Transcription regulation</keyword>
<keyword id="KW-0808">Transferase</keyword>
<keyword id="KW-0832">Ubl conjugation</keyword>
<comment type="function">
    <text evidence="2 8 9 10 12 16 18 24">Polycomb group (PcG) protein. Catalytic subunit of the PRC2/EED-EZH2 complex, which methylates (H3K9me) and 'Lys-27' (H3K27me) of histone H3, leading to transcriptional repression of the affected target gene. Able to mono-, di- and trimethylate 'Lys-27' of histone H3 to form H3K27me1, H3K27me2 and H3K27me3, respectively. Displays a preference for substrates with less methylation, loses activity when progressively more methyl groups are incorporated into H3K27, H3K27me0 &gt; H3K27me1 &gt; H3K27me2. Compared to EZH1-containing complexes, it is more abundant in embryonic stem cells and plays a major role in forming H3K27me3, which is required for embryonic stem cell identity and proper differentiation. The PRC2/EED-EZH2 complex may also serve as a recruiting platform for DNA methyltransferases, thereby linking two epigenetic repression systems. Genes repressed by the PRC2/EED-EZH2 complex include HOXA7, HOXB6 and HOXC8. EZH2 can also methylate non-histone proteins such as the transcription factor GATA4 and the nuclear receptor RORA. Regulates the circadian clock via histone methylation at the promoter of the circadian genes. Essential for the CRY1/2-mediated repression of the transcriptional activation of PER1/2 by the CLOCK-BMAL1 heterodimer; involved in the di and trimethylation of 'Lys-27' of histone H3 on PER1/2 promoters which is necessary for the CRY1/2 proteins to inhibit transcription.</text>
</comment>
<comment type="catalytic activity">
    <reaction evidence="2">
        <text>L-lysyl(27)-[histone H3] + 3 S-adenosyl-L-methionine = N(6),N(6),N(6)-trimethyl-L-lysyl(27)-[histone H3] + 3 S-adenosyl-L-homocysteine + 3 H(+)</text>
        <dbReference type="Rhea" id="RHEA:60292"/>
        <dbReference type="Rhea" id="RHEA-COMP:15535"/>
        <dbReference type="Rhea" id="RHEA-COMP:15548"/>
        <dbReference type="ChEBI" id="CHEBI:15378"/>
        <dbReference type="ChEBI" id="CHEBI:29969"/>
        <dbReference type="ChEBI" id="CHEBI:57856"/>
        <dbReference type="ChEBI" id="CHEBI:59789"/>
        <dbReference type="ChEBI" id="CHEBI:61961"/>
        <dbReference type="EC" id="2.1.1.356"/>
    </reaction>
</comment>
<comment type="subunit">
    <text evidence="2 12 13 15 18 20 21 22 23 24 25">Component of the PRC2/EED-EZH2 complex, which includes EED, EZH2, SUZ12, RBBP4 and RBBP7 and possibly AEBP2 (By similarity). The minimum components required for methyltransferase activity of the PRC2/EED-EZH2 complex are EED, EZH2 and SUZ12 (By similarity). The PRC2 complex may also interact with DNMT1, DNMT3A, DNMT3B and PHF1 via the EZH2 subunit and with SIRT1 via the SUZ12 subunit (By similarity). Interacts with HDAC1 and HDAC2 (By similarity). Binds ATRX via the SET domain (By similarity). Interacts with PRAME (By similarity). Interacts with CDYL (By similarity). Interacts with EED. Interacts with BMAL1. Interacts with CLOCK and CRY1. Interacts with DNMT3L; the interaction is direct (PubMed:24074865). Interacts with EZHIP; the interaction blocks EZH2 methyltransferase activity (PubMed:31451685). Interacts with ZNF263; recruited to the SIX3 promoter along with other proteins involved in chromatin modification and transcriptional corepression where it contributes to transcriptional repression (By similarity). Interacts with ARMC12 (By similarity). Interacts with ZMYND8; the interaction is dependent on the presence of chromatin (By similarity). Interacts with DDX18; this interaction inhibits the PRC2 complex (PubMed:31914400).</text>
</comment>
<comment type="interaction">
    <interactant intactId="EBI-904311">
        <id>Q61188</id>
    </interactant>
    <interactant intactId="EBI-3043871">
        <id>Q9CWR8</id>
        <label>Dnmt3l</label>
    </interactant>
    <organismsDiffer>false</organismsDiffer>
    <experiments>10</experiments>
</comment>
<comment type="interaction">
    <interactant intactId="EBI-904311">
        <id>Q61188</id>
    </interactant>
    <interactant intactId="EBI-904301">
        <id>Q921E6</id>
        <label>Eed</label>
    </interactant>
    <organismsDiffer>false</organismsDiffer>
    <experiments>9</experiments>
</comment>
<comment type="interaction">
    <interactant intactId="EBI-904311">
        <id>Q61188</id>
    </interactant>
    <interactant intactId="EBI-493592">
        <id>Q62315</id>
        <label>Jarid2</label>
    </interactant>
    <organismsDiffer>false</organismsDiffer>
    <experiments>15</experiments>
</comment>
<comment type="interaction">
    <interactant intactId="EBI-904311">
        <id>Q61188</id>
    </interactant>
    <interactant intactId="EBI-2531578">
        <id>Q02395</id>
        <label>Mtf2</label>
    </interactant>
    <organismsDiffer>false</organismsDiffer>
    <experiments>4</experiments>
</comment>
<comment type="interaction">
    <interactant intactId="EBI-904311">
        <id>Q61188</id>
    </interactant>
    <interactant intactId="EBI-2526494">
        <id>Q80U70</id>
        <label>Suz12</label>
    </interactant>
    <organismsDiffer>false</organismsDiffer>
    <experiments>10</experiments>
</comment>
<comment type="interaction">
    <interactant intactId="EBI-904311">
        <id>Q61188</id>
    </interactant>
    <interactant intactId="EBI-349905">
        <id>P38398</id>
        <label>BRCA1</label>
    </interactant>
    <organismsDiffer>true</organismsDiffer>
    <experiments>5</experiments>
</comment>
<comment type="interaction">
    <interactant intactId="EBI-15665134">
        <id>Q61188-1</id>
    </interactant>
    <interactant intactId="EBI-904301">
        <id>Q921E6</id>
        <label>Eed</label>
    </interactant>
    <organismsDiffer>false</organismsDiffer>
    <experiments>5</experiments>
</comment>
<comment type="subcellular location">
    <subcellularLocation>
        <location evidence="7">Nucleus</location>
    </subcellularLocation>
    <subcellularLocation>
        <location>Chromosome</location>
    </subcellularLocation>
    <text evidence="7">Localizes to the inactive X chromosome in trophoblast stem cells.</text>
</comment>
<comment type="alternative products">
    <event type="alternative splicing"/>
    <isoform>
        <id>Q61188-1</id>
        <name>ENX-1A</name>
        <sequence type="displayed"/>
    </isoform>
    <isoform>
        <id>Q61188-2</id>
        <name>ENX-1B</name>
        <sequence type="described" ref="VSP_001501"/>
    </isoform>
</comment>
<comment type="tissue specificity">
    <text evidence="19 23">Present in actively dividing cells (PubMed:19026781). Widely expressed in early embryos (PubMed:19026781). In later embryogenesis, expression restricted to central and peripheral nervous system, liver and thymus (PubMed:19026781). In adult, highest expression in spleen, testis and placenta (PubMed:19026781, PubMed:31451685). Lower levels in intestine, muscle and ovary and very low levels in brain and liver (PubMed:19026781, PubMed:31451685). No expression in heart, thyroid gland, lung and kidney (PubMed:19026781).</text>
</comment>
<comment type="developmental stage">
    <text evidence="8 11 14">Expressed in both adult and embryo with highest levels in early embryogenesis. Expressed in the fertilized oocyte. Expression decreases during differentiation of ES cells and during senescence of MEFs. Expression increases in prostate during prostate tumor development.</text>
</comment>
<comment type="induction">
    <text evidence="17">Repressed by the microRNA (miRNA) miR-26a.</text>
</comment>
<comment type="PTM">
    <text evidence="2">Phosphorylated by AKT1 (By similarity). Phosphorylation by AKT1 reduces methyltransferase activity. Phosphorylation at Thr-345 by CDK1 and CDK2 promotes maintenance of H3K27me3 levels at EZH2-target loci, thus leading to epigenetic gene silencing (By similarity).</text>
</comment>
<comment type="PTM">
    <text evidence="2">Sumoylated.</text>
</comment>
<comment type="PTM">
    <text evidence="2">Glycosylated: O-GlcNAcylation at Ser-75 by OGT increases stability of EZH2 and facilitates the formation of H3K27me3 by the PRC2/EED-EZH2 complex.</text>
</comment>
<comment type="disruption phenotype">
    <text evidence="6">Death early in development. Embryos cease development following implantation or initiate but fail to complete gastrulation.</text>
</comment>
<comment type="similarity">
    <text evidence="3">Belongs to the class V-like SAM-binding methyltransferase superfamily. Histone-lysine methyltransferase family. EZ subfamily.</text>
</comment>
<comment type="sequence caution" evidence="26">
    <conflict type="erroneous gene model prediction">
        <sequence resource="EMBL-CDS" id="AAD54020"/>
    </conflict>
</comment>